<proteinExistence type="inferred from homology"/>
<keyword id="KW-0963">Cytoplasm</keyword>
<keyword id="KW-0349">Heme</keyword>
<keyword id="KW-0408">Iron</keyword>
<keyword id="KW-0444">Lipid biosynthesis</keyword>
<keyword id="KW-0443">Lipid metabolism</keyword>
<keyword id="KW-0479">Metal-binding</keyword>
<keyword id="KW-0503">Monooxygenase</keyword>
<keyword id="KW-0560">Oxidoreductase</keyword>
<keyword id="KW-1185">Reference proteome</keyword>
<keyword id="KW-0752">Steroid biosynthesis</keyword>
<keyword id="KW-0753">Steroid metabolism</keyword>
<keyword id="KW-0756">Sterol biosynthesis</keyword>
<keyword id="KW-1207">Sterol metabolism</keyword>
<feature type="chain" id="PRO_0000426914" description="Sterol 14alpha-demethylase">
    <location>
        <begin position="1"/>
        <end position="451"/>
    </location>
</feature>
<feature type="binding site" evidence="2">
    <location>
        <position position="72"/>
    </location>
    <ligand>
        <name>heme b</name>
        <dbReference type="ChEBI" id="CHEBI:60344"/>
    </ligand>
</feature>
<feature type="binding site" evidence="2">
    <location>
        <position position="76"/>
    </location>
    <ligand>
        <name>heme b</name>
        <dbReference type="ChEBI" id="CHEBI:60344"/>
    </ligand>
</feature>
<feature type="binding site" evidence="2">
    <location>
        <position position="97"/>
    </location>
    <ligand>
        <name>heme b</name>
        <dbReference type="ChEBI" id="CHEBI:60344"/>
    </ligand>
</feature>
<feature type="binding site" evidence="2">
    <location>
        <position position="326"/>
    </location>
    <ligand>
        <name>heme b</name>
        <dbReference type="ChEBI" id="CHEBI:60344"/>
    </ligand>
</feature>
<feature type="binding site" evidence="2">
    <location>
        <position position="392"/>
    </location>
    <ligand>
        <name>heme b</name>
        <dbReference type="ChEBI" id="CHEBI:60344"/>
    </ligand>
</feature>
<feature type="binding site" description="axial binding residue" evidence="2">
    <location>
        <position position="394"/>
    </location>
    <ligand>
        <name>heme b</name>
        <dbReference type="ChEBI" id="CHEBI:60344"/>
    </ligand>
    <ligandPart>
        <name>Fe</name>
        <dbReference type="ChEBI" id="CHEBI:18248"/>
    </ligandPart>
</feature>
<dbReference type="EC" id="1.14.15.36" evidence="2"/>
<dbReference type="EMBL" id="AE000516">
    <property type="protein sequence ID" value="AAK45030.1"/>
    <property type="molecule type" value="Genomic_DNA"/>
</dbReference>
<dbReference type="PIR" id="G70706">
    <property type="entry name" value="G70706"/>
</dbReference>
<dbReference type="RefSeq" id="WP_003898577.1">
    <property type="nucleotide sequence ID" value="NZ_KK341227.1"/>
</dbReference>
<dbReference type="SMR" id="P9WPP8"/>
<dbReference type="BindingDB" id="P9WPP8"/>
<dbReference type="KEGG" id="mtc:MT0788"/>
<dbReference type="PATRIC" id="fig|83331.31.peg.847"/>
<dbReference type="HOGENOM" id="CLU_001570_15_0_11"/>
<dbReference type="Proteomes" id="UP000001020">
    <property type="component" value="Chromosome"/>
</dbReference>
<dbReference type="GO" id="GO:0005737">
    <property type="term" value="C:cytoplasm"/>
    <property type="evidence" value="ECO:0007669"/>
    <property type="project" value="UniProtKB-SubCell"/>
</dbReference>
<dbReference type="GO" id="GO:0020037">
    <property type="term" value="F:heme binding"/>
    <property type="evidence" value="ECO:0007669"/>
    <property type="project" value="InterPro"/>
</dbReference>
<dbReference type="GO" id="GO:0005506">
    <property type="term" value="F:iron ion binding"/>
    <property type="evidence" value="ECO:0007669"/>
    <property type="project" value="InterPro"/>
</dbReference>
<dbReference type="GO" id="GO:0008398">
    <property type="term" value="F:sterol 14-demethylase activity"/>
    <property type="evidence" value="ECO:0007669"/>
    <property type="project" value="UniProtKB-EC"/>
</dbReference>
<dbReference type="GO" id="GO:0016126">
    <property type="term" value="P:sterol biosynthetic process"/>
    <property type="evidence" value="ECO:0007669"/>
    <property type="project" value="UniProtKB-KW"/>
</dbReference>
<dbReference type="CDD" id="cd11042">
    <property type="entry name" value="CYP51-like"/>
    <property type="match status" value="1"/>
</dbReference>
<dbReference type="FunFam" id="1.10.630.10:FF:000120">
    <property type="entry name" value="Lanosterol 14-alpha demethylase"/>
    <property type="match status" value="1"/>
</dbReference>
<dbReference type="Gene3D" id="1.10.630.10">
    <property type="entry name" value="Cytochrome P450"/>
    <property type="match status" value="1"/>
</dbReference>
<dbReference type="InterPro" id="IPR050529">
    <property type="entry name" value="CYP450_sterol_14alpha_dmase"/>
</dbReference>
<dbReference type="InterPro" id="IPR001128">
    <property type="entry name" value="Cyt_P450"/>
</dbReference>
<dbReference type="InterPro" id="IPR017972">
    <property type="entry name" value="Cyt_P450_CS"/>
</dbReference>
<dbReference type="InterPro" id="IPR002403">
    <property type="entry name" value="Cyt_P450_E_grp-IV"/>
</dbReference>
<dbReference type="InterPro" id="IPR036396">
    <property type="entry name" value="Cyt_P450_sf"/>
</dbReference>
<dbReference type="PANTHER" id="PTHR24304:SF2">
    <property type="entry name" value="24-HYDROXYCHOLESTEROL 7-ALPHA-HYDROXYLASE"/>
    <property type="match status" value="1"/>
</dbReference>
<dbReference type="PANTHER" id="PTHR24304">
    <property type="entry name" value="CYTOCHROME P450 FAMILY 7"/>
    <property type="match status" value="1"/>
</dbReference>
<dbReference type="Pfam" id="PF00067">
    <property type="entry name" value="p450"/>
    <property type="match status" value="1"/>
</dbReference>
<dbReference type="PRINTS" id="PR00465">
    <property type="entry name" value="EP450IV"/>
</dbReference>
<dbReference type="PRINTS" id="PR00385">
    <property type="entry name" value="P450"/>
</dbReference>
<dbReference type="SUPFAM" id="SSF48264">
    <property type="entry name" value="Cytochrome P450"/>
    <property type="match status" value="1"/>
</dbReference>
<dbReference type="PROSITE" id="PS00086">
    <property type="entry name" value="CYTOCHROME_P450"/>
    <property type="match status" value="1"/>
</dbReference>
<gene>
    <name type="primary">cyp51</name>
    <name type="ordered locus">MT0788</name>
</gene>
<name>CP51_MYCTO</name>
<organism>
    <name type="scientific">Mycobacterium tuberculosis (strain CDC 1551 / Oshkosh)</name>
    <dbReference type="NCBI Taxonomy" id="83331"/>
    <lineage>
        <taxon>Bacteria</taxon>
        <taxon>Bacillati</taxon>
        <taxon>Actinomycetota</taxon>
        <taxon>Actinomycetes</taxon>
        <taxon>Mycobacteriales</taxon>
        <taxon>Mycobacteriaceae</taxon>
        <taxon>Mycobacterium</taxon>
        <taxon>Mycobacterium tuberculosis complex</taxon>
    </lineage>
</organism>
<sequence>MSAVALPRVSGGHDEHGHLEEFRTDPIGLMQRVRDECGDVGTFQLAGKQVVLLSGSHANEFFFRAGDDDLDQAKAYPFMTPIFGEGVVFDASPERRKEMLHNAALRGEQMKGHAATIEDQVRRMIADWGEAGEIDLLDFFAELTIYTSSACLIGKKFRDQLDGRFAKLYHELERGTDPLAYVDPYLPIESFRRRDEARNGLVALVADIMNGRIANPPTDKSDRDMLDVLIAVKAETGTPRFSADEITGMFISMMFAGHHTSSGTASWTLIELMRHRDAYAAVIDELDELYGDGRSVSFHALRQIPQLENVLKETLRLHPPLIILMRVAKGEFEVQGHRIHEGDLVAASPAISNRIPEDFPDPHDFVPARYEQPRQEDLLNRWTWIPFGAGRHRCVGAAFAIMQIKAIFSVLLREYEFEMAQPPESYRNDHSKMVVQLAQPACVRYRRRTGV</sequence>
<protein>
    <recommendedName>
        <fullName>Sterol 14alpha-demethylase</fullName>
        <ecNumber evidence="2">1.14.15.36</ecNumber>
    </recommendedName>
    <alternativeName>
        <fullName>CYPLI</fullName>
    </alternativeName>
    <alternativeName>
        <fullName>Cytochrome P450 51</fullName>
    </alternativeName>
    <alternativeName>
        <fullName>Cytochrome P450-14DM</fullName>
    </alternativeName>
    <alternativeName>
        <fullName>Cytochrome P450-LIA1</fullName>
    </alternativeName>
    <alternativeName>
        <fullName>Sterol 14-alpha demethylase</fullName>
    </alternativeName>
</protein>
<accession>P9WPP8</accession>
<accession>L0T4U1</accession>
<accession>P0A512</accession>
<accession>P77901</accession>
<reference key="1">
    <citation type="journal article" date="2002" name="J. Bacteriol.">
        <title>Whole-genome comparison of Mycobacterium tuberculosis clinical and laboratory strains.</title>
        <authorList>
            <person name="Fleischmann R.D."/>
            <person name="Alland D."/>
            <person name="Eisen J.A."/>
            <person name="Carpenter L."/>
            <person name="White O."/>
            <person name="Peterson J.D."/>
            <person name="DeBoy R.T."/>
            <person name="Dodson R.J."/>
            <person name="Gwinn M.L."/>
            <person name="Haft D.H."/>
            <person name="Hickey E.K."/>
            <person name="Kolonay J.F."/>
            <person name="Nelson W.C."/>
            <person name="Umayam L.A."/>
            <person name="Ermolaeva M.D."/>
            <person name="Salzberg S.L."/>
            <person name="Delcher A."/>
            <person name="Utterback T.R."/>
            <person name="Weidman J.F."/>
            <person name="Khouri H.M."/>
            <person name="Gill J."/>
            <person name="Mikula A."/>
            <person name="Bishai W."/>
            <person name="Jacobs W.R. Jr."/>
            <person name="Venter J.C."/>
            <person name="Fraser C.M."/>
        </authorList>
    </citation>
    <scope>NUCLEOTIDE SEQUENCE [LARGE SCALE GENOMIC DNA]</scope>
    <source>
        <strain>CDC 1551 / Oshkosh</strain>
    </source>
</reference>
<comment type="function">
    <text evidence="2">Sterol 14alpha-demethylase whose physiological substrate is not known. Accepts electrons from the iron-sulfur ferredoxin Fdx encoded by an adjacent gene. In vitro, catalyzes C14-demethylation of lanosterol, 24,25-dihydrolanosterol and obtusifoliol, to produce the 8,14-dienes stereoselectively.</text>
</comment>
<comment type="catalytic activity">
    <reaction evidence="2">
        <text>a 14alpha-methyl steroid + 6 reduced [2Fe-2S]-[ferredoxin] + 3 O2 + 5 H(+) = a Delta(14) steroid + formate + 6 oxidized [2Fe-2S]-[ferredoxin] + 4 H2O</text>
        <dbReference type="Rhea" id="RHEA:56752"/>
        <dbReference type="Rhea" id="RHEA-COMP:10000"/>
        <dbReference type="Rhea" id="RHEA-COMP:10001"/>
        <dbReference type="ChEBI" id="CHEBI:15377"/>
        <dbReference type="ChEBI" id="CHEBI:15378"/>
        <dbReference type="ChEBI" id="CHEBI:15379"/>
        <dbReference type="ChEBI" id="CHEBI:15740"/>
        <dbReference type="ChEBI" id="CHEBI:33737"/>
        <dbReference type="ChEBI" id="CHEBI:33738"/>
        <dbReference type="ChEBI" id="CHEBI:138029"/>
        <dbReference type="ChEBI" id="CHEBI:138031"/>
        <dbReference type="EC" id="1.14.15.36"/>
    </reaction>
</comment>
<comment type="cofactor">
    <cofactor evidence="2">
        <name>heme b</name>
        <dbReference type="ChEBI" id="CHEBI:60344"/>
    </cofactor>
</comment>
<comment type="subunit">
    <text evidence="1">Homodimer.</text>
</comment>
<comment type="subcellular location">
    <subcellularLocation>
        <location evidence="1">Cytoplasm</location>
    </subcellularLocation>
</comment>
<comment type="similarity">
    <text evidence="3">Belongs to the cytochrome P450 family.</text>
</comment>
<evidence type="ECO:0000250" key="1"/>
<evidence type="ECO:0000250" key="2">
    <source>
        <dbReference type="UniProtKB" id="P9WPP9"/>
    </source>
</evidence>
<evidence type="ECO:0000305" key="3"/>